<organism>
    <name type="scientific">Prochlorococcus marinus subsp. pastoris (strain CCMP1986 / NIES-2087 / MED4)</name>
    <dbReference type="NCBI Taxonomy" id="59919"/>
    <lineage>
        <taxon>Bacteria</taxon>
        <taxon>Bacillati</taxon>
        <taxon>Cyanobacteriota</taxon>
        <taxon>Cyanophyceae</taxon>
        <taxon>Synechococcales</taxon>
        <taxon>Prochlorococcaceae</taxon>
        <taxon>Prochlorococcus</taxon>
    </lineage>
</organism>
<dbReference type="EC" id="4.1.1.37" evidence="1"/>
<dbReference type="EMBL" id="BX548174">
    <property type="protein sequence ID" value="CAE19042.1"/>
    <property type="molecule type" value="Genomic_DNA"/>
</dbReference>
<dbReference type="RefSeq" id="WP_011132217.1">
    <property type="nucleotide sequence ID" value="NC_005072.1"/>
</dbReference>
<dbReference type="SMR" id="Q7V2A0"/>
<dbReference type="STRING" id="59919.PMM0583"/>
<dbReference type="KEGG" id="pmm:PMM0583"/>
<dbReference type="eggNOG" id="COG0407">
    <property type="taxonomic scope" value="Bacteria"/>
</dbReference>
<dbReference type="HOGENOM" id="CLU_040933_0_2_3"/>
<dbReference type="OrthoDB" id="9806656at2"/>
<dbReference type="UniPathway" id="UPA00251">
    <property type="reaction ID" value="UER00321"/>
</dbReference>
<dbReference type="Proteomes" id="UP000001026">
    <property type="component" value="Chromosome"/>
</dbReference>
<dbReference type="GO" id="GO:0005737">
    <property type="term" value="C:cytoplasm"/>
    <property type="evidence" value="ECO:0007669"/>
    <property type="project" value="UniProtKB-SubCell"/>
</dbReference>
<dbReference type="GO" id="GO:0004853">
    <property type="term" value="F:uroporphyrinogen decarboxylase activity"/>
    <property type="evidence" value="ECO:0007669"/>
    <property type="project" value="UniProtKB-UniRule"/>
</dbReference>
<dbReference type="GO" id="GO:0006782">
    <property type="term" value="P:protoporphyrinogen IX biosynthetic process"/>
    <property type="evidence" value="ECO:0007669"/>
    <property type="project" value="UniProtKB-UniRule"/>
</dbReference>
<dbReference type="CDD" id="cd00717">
    <property type="entry name" value="URO-D"/>
    <property type="match status" value="1"/>
</dbReference>
<dbReference type="FunFam" id="3.20.20.210:FF:000006">
    <property type="entry name" value="Uroporphyrinogen decarboxylase"/>
    <property type="match status" value="1"/>
</dbReference>
<dbReference type="Gene3D" id="3.20.20.210">
    <property type="match status" value="1"/>
</dbReference>
<dbReference type="HAMAP" id="MF_00218">
    <property type="entry name" value="URO_D"/>
    <property type="match status" value="1"/>
</dbReference>
<dbReference type="InterPro" id="IPR038071">
    <property type="entry name" value="UROD/MetE-like_sf"/>
</dbReference>
<dbReference type="InterPro" id="IPR006361">
    <property type="entry name" value="Uroporphyrinogen_deCO2ase_HemE"/>
</dbReference>
<dbReference type="InterPro" id="IPR000257">
    <property type="entry name" value="Uroporphyrinogen_deCOase"/>
</dbReference>
<dbReference type="NCBIfam" id="TIGR01464">
    <property type="entry name" value="hemE"/>
    <property type="match status" value="1"/>
</dbReference>
<dbReference type="PANTHER" id="PTHR21091">
    <property type="entry name" value="METHYLTETRAHYDROFOLATE:HOMOCYSTEINE METHYLTRANSFERASE RELATED"/>
    <property type="match status" value="1"/>
</dbReference>
<dbReference type="PANTHER" id="PTHR21091:SF169">
    <property type="entry name" value="UROPORPHYRINOGEN DECARBOXYLASE"/>
    <property type="match status" value="1"/>
</dbReference>
<dbReference type="Pfam" id="PF01208">
    <property type="entry name" value="URO-D"/>
    <property type="match status" value="1"/>
</dbReference>
<dbReference type="SUPFAM" id="SSF51726">
    <property type="entry name" value="UROD/MetE-like"/>
    <property type="match status" value="1"/>
</dbReference>
<dbReference type="PROSITE" id="PS00906">
    <property type="entry name" value="UROD_1"/>
    <property type="match status" value="1"/>
</dbReference>
<dbReference type="PROSITE" id="PS00907">
    <property type="entry name" value="UROD_2"/>
    <property type="match status" value="1"/>
</dbReference>
<accession>Q7V2A0</accession>
<proteinExistence type="inferred from homology"/>
<keyword id="KW-0963">Cytoplasm</keyword>
<keyword id="KW-0210">Decarboxylase</keyword>
<keyword id="KW-0456">Lyase</keyword>
<keyword id="KW-0627">Porphyrin biosynthesis</keyword>
<feature type="chain" id="PRO_0000187625" description="Uroporphyrinogen decarboxylase">
    <location>
        <begin position="1"/>
        <end position="346"/>
    </location>
</feature>
<feature type="binding site" evidence="1">
    <location>
        <begin position="26"/>
        <end position="30"/>
    </location>
    <ligand>
        <name>substrate</name>
    </ligand>
</feature>
<feature type="binding site" evidence="1">
    <location>
        <position position="45"/>
    </location>
    <ligand>
        <name>substrate</name>
    </ligand>
</feature>
<feature type="binding site" evidence="1">
    <location>
        <position position="76"/>
    </location>
    <ligand>
        <name>substrate</name>
    </ligand>
</feature>
<feature type="binding site" evidence="1">
    <location>
        <position position="153"/>
    </location>
    <ligand>
        <name>substrate</name>
    </ligand>
</feature>
<feature type="binding site" evidence="1">
    <location>
        <position position="208"/>
    </location>
    <ligand>
        <name>substrate</name>
    </ligand>
</feature>
<feature type="binding site" evidence="1">
    <location>
        <position position="323"/>
    </location>
    <ligand>
        <name>substrate</name>
    </ligand>
</feature>
<feature type="site" description="Transition state stabilizer" evidence="1">
    <location>
        <position position="76"/>
    </location>
</feature>
<reference key="1">
    <citation type="journal article" date="2003" name="Nature">
        <title>Genome divergence in two Prochlorococcus ecotypes reflects oceanic niche differentiation.</title>
        <authorList>
            <person name="Rocap G."/>
            <person name="Larimer F.W."/>
            <person name="Lamerdin J.E."/>
            <person name="Malfatti S."/>
            <person name="Chain P."/>
            <person name="Ahlgren N.A."/>
            <person name="Arellano A."/>
            <person name="Coleman M."/>
            <person name="Hauser L."/>
            <person name="Hess W.R."/>
            <person name="Johnson Z.I."/>
            <person name="Land M.L."/>
            <person name="Lindell D."/>
            <person name="Post A.F."/>
            <person name="Regala W."/>
            <person name="Shah M."/>
            <person name="Shaw S.L."/>
            <person name="Steglich C."/>
            <person name="Sullivan M.B."/>
            <person name="Ting C.S."/>
            <person name="Tolonen A."/>
            <person name="Webb E.A."/>
            <person name="Zinser E.R."/>
            <person name="Chisholm S.W."/>
        </authorList>
    </citation>
    <scope>NUCLEOTIDE SEQUENCE [LARGE SCALE GENOMIC DNA]</scope>
    <source>
        <strain>CCMP1986 / NIES-2087 / MED4</strain>
    </source>
</reference>
<gene>
    <name evidence="1" type="primary">hemE</name>
    <name type="ordered locus">PMM0583</name>
</gene>
<comment type="function">
    <text evidence="1">Catalyzes the decarboxylation of four acetate groups of uroporphyrinogen-III to yield coproporphyrinogen-III.</text>
</comment>
<comment type="catalytic activity">
    <reaction evidence="1">
        <text>uroporphyrinogen III + 4 H(+) = coproporphyrinogen III + 4 CO2</text>
        <dbReference type="Rhea" id="RHEA:19865"/>
        <dbReference type="ChEBI" id="CHEBI:15378"/>
        <dbReference type="ChEBI" id="CHEBI:16526"/>
        <dbReference type="ChEBI" id="CHEBI:57308"/>
        <dbReference type="ChEBI" id="CHEBI:57309"/>
        <dbReference type="EC" id="4.1.1.37"/>
    </reaction>
</comment>
<comment type="pathway">
    <text evidence="1">Porphyrin-containing compound metabolism; protoporphyrin-IX biosynthesis; coproporphyrinogen-III from 5-aminolevulinate: step 4/4.</text>
</comment>
<comment type="subunit">
    <text evidence="1">Homodimer.</text>
</comment>
<comment type="subcellular location">
    <subcellularLocation>
        <location evidence="1">Cytoplasm</location>
    </subcellularLocation>
</comment>
<comment type="similarity">
    <text evidence="1">Belongs to the uroporphyrinogen decarboxylase family.</text>
</comment>
<sequence length="346" mass="38974">MGENLPLLLSAALGKKVNRPPVWMMRQAGRYMKIYRDLRERYPSFRERSENPELSYEISMQPFLAFKPDGVILFSDILTPLPGMGINFEIIESKGPIIEDPIRNIRQVEKLKELIPNESLSFVGEVLSSLKKDVKNEATVLGFVGAPWTLAAYVVEGKSSKNYSLIKSMAFKEPDLLHKLLDHFAKSIGEYLKYQIKSGAQVVQIFDSWAGQLSPQDYDIFAGPYQKKVVDIVKEEFPDTPIILYISGSAGVLERMAKTGVDIISLDWTVDIEEACKRIPTGIGIQGNVDPGILFGNKDSIKERIDNTFNKVKERKYILNLGHGILPGTPEENAKTFFEHGKKLTY</sequence>
<protein>
    <recommendedName>
        <fullName evidence="1">Uroporphyrinogen decarboxylase</fullName>
        <shortName evidence="1">UPD</shortName>
        <shortName evidence="1">URO-D</shortName>
        <ecNumber evidence="1">4.1.1.37</ecNumber>
    </recommendedName>
</protein>
<evidence type="ECO:0000255" key="1">
    <source>
        <dbReference type="HAMAP-Rule" id="MF_00218"/>
    </source>
</evidence>
<name>DCUP_PROMP</name>